<sequence>MANRNNVTEFILLGLTENPKMQKIIFVVFSVIYINAMIGNVLIVVTITASPSLRSPMYFFLAYLSFIDACYSSVNTPKLITDSLYENKTILFNGCMTQVFGEHFFRGVEVILLTVMAYDHYVAICKPLHYTTVMKQHVCSLLVGVSWVGGFLHATIQILFICQLPFCGPNVIDHFMCDLYTLINLACTNTHTLGLFIAANSGFICLLNCLLLLVSCVVILYSLKTHSLEARHEALSTCVSHITVVILSFIPCIFVYMRPPATLPIDKAVAVFYTMITSMLNPLIYTLRNAQMKNAIRKLCSRKAISSVK</sequence>
<accession>Q8NGP0</accession>
<accession>A6NJJ3</accession>
<accession>B9EH30</accession>
<accession>Q6IF48</accession>
<accession>Q96R68</accession>
<name>OR4CD_HUMAN</name>
<comment type="function">
    <text evidence="6">Odorant receptor.</text>
</comment>
<comment type="subcellular location">
    <subcellularLocation>
        <location>Cell membrane</location>
        <topology>Multi-pass membrane protein</topology>
    </subcellularLocation>
</comment>
<comment type="similarity">
    <text evidence="2">Belongs to the G-protein coupled receptor 1 family.</text>
</comment>
<comment type="online information" name="Human Olfactory Receptor Data Exploratorium (HORDE)">
    <link uri="http://genome.weizmann.ac.il/horde/card/index/symbol:OR4C13"/>
</comment>
<gene>
    <name type="primary">OR4C13</name>
</gene>
<reference key="1">
    <citation type="submission" date="2001-07" db="EMBL/GenBank/DDBJ databases">
        <title>Genome-wide discovery and analysis of human seven transmembrane helix receptor genes.</title>
        <authorList>
            <person name="Suwa M."/>
            <person name="Sato T."/>
            <person name="Okouchi I."/>
            <person name="Arita M."/>
            <person name="Futami K."/>
            <person name="Matsumoto S."/>
            <person name="Tsutsumi S."/>
            <person name="Aburatani H."/>
            <person name="Asai K."/>
            <person name="Akiyama Y."/>
        </authorList>
    </citation>
    <scope>NUCLEOTIDE SEQUENCE [GENOMIC DNA]</scope>
    <scope>VARIANT ILE-133</scope>
</reference>
<reference key="2">
    <citation type="journal article" date="2006" name="Nature">
        <title>Human chromosome 11 DNA sequence and analysis including novel gene identification.</title>
        <authorList>
            <person name="Taylor T.D."/>
            <person name="Noguchi H."/>
            <person name="Totoki Y."/>
            <person name="Toyoda A."/>
            <person name="Kuroki Y."/>
            <person name="Dewar K."/>
            <person name="Lloyd C."/>
            <person name="Itoh T."/>
            <person name="Takeda T."/>
            <person name="Kim D.-W."/>
            <person name="She X."/>
            <person name="Barlow K.F."/>
            <person name="Bloom T."/>
            <person name="Bruford E."/>
            <person name="Chang J.L."/>
            <person name="Cuomo C.A."/>
            <person name="Eichler E."/>
            <person name="FitzGerald M.G."/>
            <person name="Jaffe D.B."/>
            <person name="LaButti K."/>
            <person name="Nicol R."/>
            <person name="Park H.-S."/>
            <person name="Seaman C."/>
            <person name="Sougnez C."/>
            <person name="Yang X."/>
            <person name="Zimmer A.R."/>
            <person name="Zody M.C."/>
            <person name="Birren B.W."/>
            <person name="Nusbaum C."/>
            <person name="Fujiyama A."/>
            <person name="Hattori M."/>
            <person name="Rogers J."/>
            <person name="Lander E.S."/>
            <person name="Sakaki Y."/>
        </authorList>
    </citation>
    <scope>NUCLEOTIDE SEQUENCE [LARGE SCALE GENOMIC DNA]</scope>
</reference>
<reference key="3">
    <citation type="submission" date="2005-09" db="EMBL/GenBank/DDBJ databases">
        <authorList>
            <person name="Mural R.J."/>
            <person name="Istrail S."/>
            <person name="Sutton G."/>
            <person name="Florea L."/>
            <person name="Halpern A.L."/>
            <person name="Mobarry C.M."/>
            <person name="Lippert R."/>
            <person name="Walenz B."/>
            <person name="Shatkay H."/>
            <person name="Dew I."/>
            <person name="Miller J.R."/>
            <person name="Flanigan M.J."/>
            <person name="Edwards N.J."/>
            <person name="Bolanos R."/>
            <person name="Fasulo D."/>
            <person name="Halldorsson B.V."/>
            <person name="Hannenhalli S."/>
            <person name="Turner R."/>
            <person name="Yooseph S."/>
            <person name="Lu F."/>
            <person name="Nusskern D.R."/>
            <person name="Shue B.C."/>
            <person name="Zheng X.H."/>
            <person name="Zhong F."/>
            <person name="Delcher A.L."/>
            <person name="Huson D.H."/>
            <person name="Kravitz S.A."/>
            <person name="Mouchard L."/>
            <person name="Reinert K."/>
            <person name="Remington K.A."/>
            <person name="Clark A.G."/>
            <person name="Waterman M.S."/>
            <person name="Eichler E.E."/>
            <person name="Adams M.D."/>
            <person name="Hunkapiller M.W."/>
            <person name="Myers E.W."/>
            <person name="Venter J.C."/>
        </authorList>
    </citation>
    <scope>NUCLEOTIDE SEQUENCE [LARGE SCALE GENOMIC DNA]</scope>
</reference>
<reference key="4">
    <citation type="journal article" date="2004" name="Genome Res.">
        <title>The status, quality, and expansion of the NIH full-length cDNA project: the Mammalian Gene Collection (MGC).</title>
        <authorList>
            <consortium name="The MGC Project Team"/>
        </authorList>
    </citation>
    <scope>NUCLEOTIDE SEQUENCE [LARGE SCALE MRNA]</scope>
    <scope>VARIANT ILE-133</scope>
    <source>
        <tissue>Testis</tissue>
    </source>
</reference>
<reference key="5">
    <citation type="journal article" date="2002" name="Genomics">
        <title>DEFOG: a practical scheme for deciphering families of genes.</title>
        <authorList>
            <person name="Fuchs T."/>
            <person name="Malecova B."/>
            <person name="Linhart C."/>
            <person name="Sharan R."/>
            <person name="Khen M."/>
            <person name="Herwig R."/>
            <person name="Shmulevich D."/>
            <person name="Elkon R."/>
            <person name="Steinfath M."/>
            <person name="O'Brien J.K."/>
            <person name="Radelof U."/>
            <person name="Lehrach H."/>
            <person name="Lancet D."/>
            <person name="Shamir R."/>
        </authorList>
    </citation>
    <scope>NUCLEOTIDE SEQUENCE [GENOMIC DNA] OF 66-278</scope>
    <scope>VARIANT ILE-133</scope>
</reference>
<reference key="6">
    <citation type="journal article" date="2004" name="Proc. Natl. Acad. Sci. U.S.A.">
        <title>The human olfactory receptor gene family.</title>
        <authorList>
            <person name="Malnic B."/>
            <person name="Godfrey P.A."/>
            <person name="Buck L.B."/>
        </authorList>
    </citation>
    <scope>IDENTIFICATION</scope>
</reference>
<reference key="7">
    <citation type="journal article" date="2004" name="Proc. Natl. Acad. Sci. U.S.A.">
        <authorList>
            <person name="Malnic B."/>
            <person name="Godfrey P.A."/>
            <person name="Buck L.B."/>
        </authorList>
    </citation>
    <scope>ERRATUM OF PUBMED:14983052</scope>
</reference>
<keyword id="KW-1003">Cell membrane</keyword>
<keyword id="KW-1015">Disulfide bond</keyword>
<keyword id="KW-0297">G-protein coupled receptor</keyword>
<keyword id="KW-0325">Glycoprotein</keyword>
<keyword id="KW-0472">Membrane</keyword>
<keyword id="KW-0552">Olfaction</keyword>
<keyword id="KW-0675">Receptor</keyword>
<keyword id="KW-1185">Reference proteome</keyword>
<keyword id="KW-0716">Sensory transduction</keyword>
<keyword id="KW-0807">Transducer</keyword>
<keyword id="KW-0812">Transmembrane</keyword>
<keyword id="KW-1133">Transmembrane helix</keyword>
<dbReference type="EMBL" id="AB065750">
    <property type="protein sequence ID" value="BAC05970.1"/>
    <property type="molecule type" value="Genomic_DNA"/>
</dbReference>
<dbReference type="EMBL" id="AP006587">
    <property type="status" value="NOT_ANNOTATED_CDS"/>
    <property type="molecule type" value="Genomic_DNA"/>
</dbReference>
<dbReference type="EMBL" id="AC073113">
    <property type="status" value="NOT_ANNOTATED_CDS"/>
    <property type="molecule type" value="Genomic_DNA"/>
</dbReference>
<dbReference type="EMBL" id="CH471064">
    <property type="protein sequence ID" value="EAW67853.1"/>
    <property type="molecule type" value="Genomic_DNA"/>
</dbReference>
<dbReference type="EMBL" id="BC137005">
    <property type="protein sequence ID" value="AAI37006.1"/>
    <property type="molecule type" value="mRNA"/>
</dbReference>
<dbReference type="EMBL" id="AF399575">
    <property type="protein sequence ID" value="AAK95060.1"/>
    <property type="molecule type" value="Genomic_DNA"/>
</dbReference>
<dbReference type="EMBL" id="BK004414">
    <property type="protein sequence ID" value="DAA04812.1"/>
    <property type="molecule type" value="Genomic_DNA"/>
</dbReference>
<dbReference type="CCDS" id="CCDS31495.1"/>
<dbReference type="RefSeq" id="NP_001001955.2">
    <property type="nucleotide sequence ID" value="NM_001001955.2"/>
</dbReference>
<dbReference type="SMR" id="Q8NGP0"/>
<dbReference type="FunCoup" id="Q8NGP0">
    <property type="interactions" value="416"/>
</dbReference>
<dbReference type="STRING" id="9606.ENSP00000452277"/>
<dbReference type="GlyCosmos" id="Q8NGP0">
    <property type="glycosylation" value="2 sites, No reported glycans"/>
</dbReference>
<dbReference type="GlyGen" id="Q8NGP0">
    <property type="glycosylation" value="2 sites"/>
</dbReference>
<dbReference type="iPTMnet" id="Q8NGP0"/>
<dbReference type="PhosphoSitePlus" id="Q8NGP0"/>
<dbReference type="BioMuta" id="OR4C13"/>
<dbReference type="DMDM" id="212276453"/>
<dbReference type="MassIVE" id="Q8NGP0"/>
<dbReference type="PaxDb" id="9606-ENSP00000452277"/>
<dbReference type="Antibodypedia" id="63202">
    <property type="antibodies" value="93 antibodies from 18 providers"/>
</dbReference>
<dbReference type="DNASU" id="283092"/>
<dbReference type="Ensembl" id="ENST00000555099.1">
    <property type="protein sequence ID" value="ENSP00000452277.1"/>
    <property type="gene ID" value="ENSG00000258817.1"/>
</dbReference>
<dbReference type="GeneID" id="283092"/>
<dbReference type="KEGG" id="hsa:283092"/>
<dbReference type="MANE-Select" id="ENST00000555099.1">
    <property type="protein sequence ID" value="ENSP00000452277.1"/>
    <property type="RefSeq nucleotide sequence ID" value="NM_001001955.2"/>
    <property type="RefSeq protein sequence ID" value="NP_001001955.2"/>
</dbReference>
<dbReference type="UCSC" id="uc010rhz.2">
    <property type="organism name" value="human"/>
</dbReference>
<dbReference type="AGR" id="HGNC:15169"/>
<dbReference type="CTD" id="283092"/>
<dbReference type="GeneCards" id="OR4C13"/>
<dbReference type="HGNC" id="HGNC:15169">
    <property type="gene designation" value="OR4C13"/>
</dbReference>
<dbReference type="HPA" id="ENSG00000258817">
    <property type="expression patterns" value="Not detected"/>
</dbReference>
<dbReference type="neXtProt" id="NX_Q8NGP0"/>
<dbReference type="PharmGKB" id="PA32255"/>
<dbReference type="VEuPathDB" id="HostDB:ENSG00000258817"/>
<dbReference type="eggNOG" id="ENOG502TE7F">
    <property type="taxonomic scope" value="Eukaryota"/>
</dbReference>
<dbReference type="GeneTree" id="ENSGT00940000154261"/>
<dbReference type="HOGENOM" id="CLU_012526_0_1_1"/>
<dbReference type="InParanoid" id="Q8NGP0"/>
<dbReference type="OMA" id="FMCDLYT"/>
<dbReference type="OrthoDB" id="10017003at2759"/>
<dbReference type="PAN-GO" id="Q8NGP0">
    <property type="GO annotations" value="2 GO annotations based on evolutionary models"/>
</dbReference>
<dbReference type="PhylomeDB" id="Q8NGP0"/>
<dbReference type="TreeFam" id="TF352732"/>
<dbReference type="PathwayCommons" id="Q8NGP0"/>
<dbReference type="Reactome" id="R-HSA-9752946">
    <property type="pathway name" value="Expression and translocation of olfactory receptors"/>
</dbReference>
<dbReference type="BioGRID-ORCS" id="283092">
    <property type="hits" value="13 hits in 695 CRISPR screens"/>
</dbReference>
<dbReference type="GeneWiki" id="OR4C13"/>
<dbReference type="GenomeRNAi" id="283092"/>
<dbReference type="Pharos" id="Q8NGP0">
    <property type="development level" value="Tdark"/>
</dbReference>
<dbReference type="PRO" id="PR:Q8NGP0"/>
<dbReference type="Proteomes" id="UP000005640">
    <property type="component" value="Chromosome 11"/>
</dbReference>
<dbReference type="RNAct" id="Q8NGP0">
    <property type="molecule type" value="protein"/>
</dbReference>
<dbReference type="Bgee" id="ENSG00000258817">
    <property type="expression patterns" value="Expressed in male germ line stem cell (sensu Vertebrata) in testis and 1 other cell type or tissue"/>
</dbReference>
<dbReference type="GO" id="GO:0005886">
    <property type="term" value="C:plasma membrane"/>
    <property type="evidence" value="ECO:0000318"/>
    <property type="project" value="GO_Central"/>
</dbReference>
<dbReference type="GO" id="GO:0004930">
    <property type="term" value="F:G protein-coupled receptor activity"/>
    <property type="evidence" value="ECO:0007669"/>
    <property type="project" value="UniProtKB-KW"/>
</dbReference>
<dbReference type="GO" id="GO:0004984">
    <property type="term" value="F:olfactory receptor activity"/>
    <property type="evidence" value="ECO:0000318"/>
    <property type="project" value="GO_Central"/>
</dbReference>
<dbReference type="CDD" id="cd15939">
    <property type="entry name" value="7tmA_OR4A-like"/>
    <property type="match status" value="1"/>
</dbReference>
<dbReference type="FunFam" id="1.20.1070.10:FF:000007">
    <property type="entry name" value="Olfactory receptor"/>
    <property type="match status" value="1"/>
</dbReference>
<dbReference type="Gene3D" id="1.20.1070.10">
    <property type="entry name" value="Rhodopsin 7-helix transmembrane proteins"/>
    <property type="match status" value="1"/>
</dbReference>
<dbReference type="InterPro" id="IPR000276">
    <property type="entry name" value="GPCR_Rhodpsn"/>
</dbReference>
<dbReference type="InterPro" id="IPR017452">
    <property type="entry name" value="GPCR_Rhodpsn_7TM"/>
</dbReference>
<dbReference type="InterPro" id="IPR000725">
    <property type="entry name" value="Olfact_rcpt"/>
</dbReference>
<dbReference type="InterPro" id="IPR050427">
    <property type="entry name" value="Olfactory_Receptors"/>
</dbReference>
<dbReference type="PANTHER" id="PTHR48002">
    <property type="entry name" value="OLFACTORY RECEPTOR"/>
    <property type="match status" value="1"/>
</dbReference>
<dbReference type="Pfam" id="PF13853">
    <property type="entry name" value="7tm_4"/>
    <property type="match status" value="1"/>
</dbReference>
<dbReference type="PRINTS" id="PR00237">
    <property type="entry name" value="GPCRRHODOPSN"/>
</dbReference>
<dbReference type="PRINTS" id="PR00245">
    <property type="entry name" value="OLFACTORYR"/>
</dbReference>
<dbReference type="SUPFAM" id="SSF81321">
    <property type="entry name" value="Family A G protein-coupled receptor-like"/>
    <property type="match status" value="1"/>
</dbReference>
<dbReference type="PROSITE" id="PS50262">
    <property type="entry name" value="G_PROTEIN_RECEP_F1_2"/>
    <property type="match status" value="1"/>
</dbReference>
<protein>
    <recommendedName>
        <fullName>Olfactory receptor 4C13</fullName>
    </recommendedName>
    <alternativeName>
        <fullName>Olfactory receptor OR11-260</fullName>
    </alternativeName>
</protein>
<feature type="chain" id="PRO_0000150534" description="Olfactory receptor 4C13">
    <location>
        <begin position="1"/>
        <end position="309"/>
    </location>
</feature>
<feature type="topological domain" description="Extracellular" evidence="1">
    <location>
        <begin position="1"/>
        <end position="23"/>
    </location>
</feature>
<feature type="transmembrane region" description="Helical; Name=1" evidence="1">
    <location>
        <begin position="24"/>
        <end position="47"/>
    </location>
</feature>
<feature type="topological domain" description="Cytoplasmic" evidence="1">
    <location>
        <begin position="48"/>
        <end position="55"/>
    </location>
</feature>
<feature type="transmembrane region" description="Helical; Name=2" evidence="1">
    <location>
        <begin position="56"/>
        <end position="77"/>
    </location>
</feature>
<feature type="topological domain" description="Extracellular" evidence="1">
    <location>
        <begin position="78"/>
        <end position="98"/>
    </location>
</feature>
<feature type="transmembrane region" description="Helical; Name=3" evidence="1">
    <location>
        <begin position="99"/>
        <end position="118"/>
    </location>
</feature>
<feature type="topological domain" description="Cytoplasmic" evidence="1">
    <location>
        <begin position="119"/>
        <end position="137"/>
    </location>
</feature>
<feature type="transmembrane region" description="Helical; Name=4" evidence="1">
    <location>
        <begin position="138"/>
        <end position="156"/>
    </location>
</feature>
<feature type="topological domain" description="Extracellular" evidence="1">
    <location>
        <begin position="157"/>
        <end position="193"/>
    </location>
</feature>
<feature type="transmembrane region" description="Helical; Name=5" evidence="1">
    <location>
        <begin position="194"/>
        <end position="217"/>
    </location>
</feature>
<feature type="topological domain" description="Cytoplasmic" evidence="1">
    <location>
        <begin position="218"/>
        <end position="233"/>
    </location>
</feature>
<feature type="transmembrane region" description="Helical; Name=6" evidence="1">
    <location>
        <begin position="234"/>
        <end position="256"/>
    </location>
</feature>
<feature type="topological domain" description="Extracellular" evidence="1">
    <location>
        <begin position="257"/>
        <end position="267"/>
    </location>
</feature>
<feature type="transmembrane region" description="Helical; Name=7" evidence="1">
    <location>
        <begin position="268"/>
        <end position="287"/>
    </location>
</feature>
<feature type="topological domain" description="Cytoplasmic" evidence="1">
    <location>
        <begin position="288"/>
        <end position="309"/>
    </location>
</feature>
<feature type="glycosylation site" description="N-linked (GlcNAc...) asparagine" evidence="1">
    <location>
        <position position="6"/>
    </location>
</feature>
<feature type="glycosylation site" description="N-linked (GlcNAc...) asparagine" evidence="1">
    <location>
        <position position="87"/>
    </location>
</feature>
<feature type="disulfide bond" evidence="2">
    <location>
        <begin position="95"/>
        <end position="187"/>
    </location>
</feature>
<feature type="sequence variant" id="VAR_067440" description="In dbSNP:rs28378220.">
    <original>A</original>
    <variation>V</variation>
    <location>
        <position position="2"/>
    </location>
</feature>
<feature type="sequence variant" id="VAR_067441" description="In dbSNP:rs28662375." evidence="3 4 5">
    <original>V</original>
    <variation>I</variation>
    <location>
        <position position="133"/>
    </location>
</feature>
<organism>
    <name type="scientific">Homo sapiens</name>
    <name type="common">Human</name>
    <dbReference type="NCBI Taxonomy" id="9606"/>
    <lineage>
        <taxon>Eukaryota</taxon>
        <taxon>Metazoa</taxon>
        <taxon>Chordata</taxon>
        <taxon>Craniata</taxon>
        <taxon>Vertebrata</taxon>
        <taxon>Euteleostomi</taxon>
        <taxon>Mammalia</taxon>
        <taxon>Eutheria</taxon>
        <taxon>Euarchontoglires</taxon>
        <taxon>Primates</taxon>
        <taxon>Haplorrhini</taxon>
        <taxon>Catarrhini</taxon>
        <taxon>Hominidae</taxon>
        <taxon>Homo</taxon>
    </lineage>
</organism>
<proteinExistence type="evidence at transcript level"/>
<evidence type="ECO:0000255" key="1"/>
<evidence type="ECO:0000255" key="2">
    <source>
        <dbReference type="PROSITE-ProRule" id="PRU00521"/>
    </source>
</evidence>
<evidence type="ECO:0000269" key="3">
    <source>
    </source>
</evidence>
<evidence type="ECO:0000269" key="4">
    <source>
    </source>
</evidence>
<evidence type="ECO:0000269" key="5">
    <source ref="1"/>
</evidence>
<evidence type="ECO:0000305" key="6"/>